<feature type="chain" id="PRO_0000267538" description="Type III pantothenate kinase">
    <location>
        <begin position="1"/>
        <end position="256"/>
    </location>
</feature>
<feature type="active site" description="Proton acceptor" evidence="1">
    <location>
        <position position="111"/>
    </location>
</feature>
<feature type="binding site" evidence="1">
    <location>
        <begin position="6"/>
        <end position="13"/>
    </location>
    <ligand>
        <name>ATP</name>
        <dbReference type="ChEBI" id="CHEBI:30616"/>
    </ligand>
</feature>
<feature type="binding site" evidence="1">
    <location>
        <begin position="109"/>
        <end position="112"/>
    </location>
    <ligand>
        <name>substrate</name>
    </ligand>
</feature>
<feature type="binding site" evidence="1">
    <location>
        <position position="132"/>
    </location>
    <ligand>
        <name>K(+)</name>
        <dbReference type="ChEBI" id="CHEBI:29103"/>
    </ligand>
</feature>
<feature type="binding site" evidence="1">
    <location>
        <position position="135"/>
    </location>
    <ligand>
        <name>ATP</name>
        <dbReference type="ChEBI" id="CHEBI:30616"/>
    </ligand>
</feature>
<feature type="binding site" evidence="1">
    <location>
        <position position="186"/>
    </location>
    <ligand>
        <name>substrate</name>
    </ligand>
</feature>
<proteinExistence type="inferred from homology"/>
<dbReference type="EC" id="2.7.1.33" evidence="1"/>
<dbReference type="EMBL" id="AE009951">
    <property type="protein sequence ID" value="AAL94957.1"/>
    <property type="molecule type" value="Genomic_DNA"/>
</dbReference>
<dbReference type="RefSeq" id="NP_603658.1">
    <property type="nucleotide sequence ID" value="NC_003454.1"/>
</dbReference>
<dbReference type="RefSeq" id="WP_005903485.1">
    <property type="nucleotide sequence ID" value="NZ_OZ209243.1"/>
</dbReference>
<dbReference type="SMR" id="Q8RFE4"/>
<dbReference type="FunCoup" id="Q8RFE4">
    <property type="interactions" value="319"/>
</dbReference>
<dbReference type="STRING" id="190304.FN0761"/>
<dbReference type="PaxDb" id="190304-FN0761"/>
<dbReference type="EnsemblBacteria" id="AAL94957">
    <property type="protein sequence ID" value="AAL94957"/>
    <property type="gene ID" value="FN0761"/>
</dbReference>
<dbReference type="KEGG" id="fnu:FN0761"/>
<dbReference type="PATRIC" id="fig|190304.8.peg.1324"/>
<dbReference type="eggNOG" id="COG1521">
    <property type="taxonomic scope" value="Bacteria"/>
</dbReference>
<dbReference type="HOGENOM" id="CLU_066627_1_1_0"/>
<dbReference type="InParanoid" id="Q8RFE4"/>
<dbReference type="BioCyc" id="FNUC190304:G1FZS-1347-MONOMER"/>
<dbReference type="UniPathway" id="UPA00241">
    <property type="reaction ID" value="UER00352"/>
</dbReference>
<dbReference type="Proteomes" id="UP000002521">
    <property type="component" value="Chromosome"/>
</dbReference>
<dbReference type="GO" id="GO:0005737">
    <property type="term" value="C:cytoplasm"/>
    <property type="evidence" value="ECO:0007669"/>
    <property type="project" value="UniProtKB-SubCell"/>
</dbReference>
<dbReference type="GO" id="GO:0005524">
    <property type="term" value="F:ATP binding"/>
    <property type="evidence" value="ECO:0007669"/>
    <property type="project" value="UniProtKB-UniRule"/>
</dbReference>
<dbReference type="GO" id="GO:0046872">
    <property type="term" value="F:metal ion binding"/>
    <property type="evidence" value="ECO:0007669"/>
    <property type="project" value="UniProtKB-KW"/>
</dbReference>
<dbReference type="GO" id="GO:0004594">
    <property type="term" value="F:pantothenate kinase activity"/>
    <property type="evidence" value="ECO:0007669"/>
    <property type="project" value="UniProtKB-UniRule"/>
</dbReference>
<dbReference type="GO" id="GO:0015937">
    <property type="term" value="P:coenzyme A biosynthetic process"/>
    <property type="evidence" value="ECO:0007669"/>
    <property type="project" value="UniProtKB-UniRule"/>
</dbReference>
<dbReference type="CDD" id="cd24015">
    <property type="entry name" value="ASKHA_NBD_PanK-III"/>
    <property type="match status" value="1"/>
</dbReference>
<dbReference type="Gene3D" id="3.30.420.40">
    <property type="match status" value="2"/>
</dbReference>
<dbReference type="HAMAP" id="MF_01274">
    <property type="entry name" value="Pantothen_kinase_3"/>
    <property type="match status" value="1"/>
</dbReference>
<dbReference type="InterPro" id="IPR043129">
    <property type="entry name" value="ATPase_NBD"/>
</dbReference>
<dbReference type="InterPro" id="IPR004619">
    <property type="entry name" value="Type_III_PanK"/>
</dbReference>
<dbReference type="NCBIfam" id="TIGR00671">
    <property type="entry name" value="baf"/>
    <property type="match status" value="1"/>
</dbReference>
<dbReference type="NCBIfam" id="NF009848">
    <property type="entry name" value="PRK13318.1-6"/>
    <property type="match status" value="1"/>
</dbReference>
<dbReference type="NCBIfam" id="NF009855">
    <property type="entry name" value="PRK13321.1"/>
    <property type="match status" value="1"/>
</dbReference>
<dbReference type="PANTHER" id="PTHR34265">
    <property type="entry name" value="TYPE III PANTOTHENATE KINASE"/>
    <property type="match status" value="1"/>
</dbReference>
<dbReference type="PANTHER" id="PTHR34265:SF1">
    <property type="entry name" value="TYPE III PANTOTHENATE KINASE"/>
    <property type="match status" value="1"/>
</dbReference>
<dbReference type="Pfam" id="PF03309">
    <property type="entry name" value="Pan_kinase"/>
    <property type="match status" value="1"/>
</dbReference>
<dbReference type="SUPFAM" id="SSF53067">
    <property type="entry name" value="Actin-like ATPase domain"/>
    <property type="match status" value="2"/>
</dbReference>
<keyword id="KW-0067">ATP-binding</keyword>
<keyword id="KW-0173">Coenzyme A biosynthesis</keyword>
<keyword id="KW-0963">Cytoplasm</keyword>
<keyword id="KW-0418">Kinase</keyword>
<keyword id="KW-0479">Metal-binding</keyword>
<keyword id="KW-0547">Nucleotide-binding</keyword>
<keyword id="KW-0630">Potassium</keyword>
<keyword id="KW-1185">Reference proteome</keyword>
<keyword id="KW-0808">Transferase</keyword>
<reference key="1">
    <citation type="journal article" date="2002" name="J. Bacteriol.">
        <title>Genome sequence and analysis of the oral bacterium Fusobacterium nucleatum strain ATCC 25586.</title>
        <authorList>
            <person name="Kapatral V."/>
            <person name="Anderson I."/>
            <person name="Ivanova N."/>
            <person name="Reznik G."/>
            <person name="Los T."/>
            <person name="Lykidis A."/>
            <person name="Bhattacharyya A."/>
            <person name="Bartman A."/>
            <person name="Gardner W."/>
            <person name="Grechkin G."/>
            <person name="Zhu L."/>
            <person name="Vasieva O."/>
            <person name="Chu L."/>
            <person name="Kogan Y."/>
            <person name="Chaga O."/>
            <person name="Goltsman E."/>
            <person name="Bernal A."/>
            <person name="Larsen N."/>
            <person name="D'Souza M."/>
            <person name="Walunas T."/>
            <person name="Pusch G."/>
            <person name="Haselkorn R."/>
            <person name="Fonstein M."/>
            <person name="Kyrpides N.C."/>
            <person name="Overbeek R."/>
        </authorList>
    </citation>
    <scope>NUCLEOTIDE SEQUENCE [LARGE SCALE GENOMIC DNA]</scope>
    <source>
        <strain>ATCC 25586 / DSM 15643 / BCRC 10681 / CIP 101130 / JCM 8532 / KCTC 2640 / LMG 13131 / VPI 4355</strain>
    </source>
</reference>
<organism>
    <name type="scientific">Fusobacterium nucleatum subsp. nucleatum (strain ATCC 25586 / DSM 15643 / BCRC 10681 / CIP 101130 / JCM 8532 / KCTC 2640 / LMG 13131 / VPI 4355)</name>
    <dbReference type="NCBI Taxonomy" id="190304"/>
    <lineage>
        <taxon>Bacteria</taxon>
        <taxon>Fusobacteriati</taxon>
        <taxon>Fusobacteriota</taxon>
        <taxon>Fusobacteriia</taxon>
        <taxon>Fusobacteriales</taxon>
        <taxon>Fusobacteriaceae</taxon>
        <taxon>Fusobacterium</taxon>
    </lineage>
</organism>
<comment type="function">
    <text evidence="1">Catalyzes the phosphorylation of pantothenate (Pan), the first step in CoA biosynthesis.</text>
</comment>
<comment type="catalytic activity">
    <reaction evidence="1">
        <text>(R)-pantothenate + ATP = (R)-4'-phosphopantothenate + ADP + H(+)</text>
        <dbReference type="Rhea" id="RHEA:16373"/>
        <dbReference type="ChEBI" id="CHEBI:10986"/>
        <dbReference type="ChEBI" id="CHEBI:15378"/>
        <dbReference type="ChEBI" id="CHEBI:29032"/>
        <dbReference type="ChEBI" id="CHEBI:30616"/>
        <dbReference type="ChEBI" id="CHEBI:456216"/>
        <dbReference type="EC" id="2.7.1.33"/>
    </reaction>
</comment>
<comment type="cofactor">
    <cofactor evidence="1">
        <name>NH4(+)</name>
        <dbReference type="ChEBI" id="CHEBI:28938"/>
    </cofactor>
    <cofactor evidence="1">
        <name>K(+)</name>
        <dbReference type="ChEBI" id="CHEBI:29103"/>
    </cofactor>
    <text evidence="1">A monovalent cation. Ammonium or potassium.</text>
</comment>
<comment type="pathway">
    <text evidence="1">Cofactor biosynthesis; coenzyme A biosynthesis; CoA from (R)-pantothenate: step 1/5.</text>
</comment>
<comment type="subunit">
    <text evidence="1">Homodimer.</text>
</comment>
<comment type="subcellular location">
    <subcellularLocation>
        <location evidence="1">Cytoplasm</location>
    </subcellularLocation>
</comment>
<comment type="similarity">
    <text evidence="1">Belongs to the type III pantothenate kinase family.</text>
</comment>
<evidence type="ECO:0000255" key="1">
    <source>
        <dbReference type="HAMAP-Rule" id="MF_01274"/>
    </source>
</evidence>
<gene>
    <name evidence="1" type="primary">coaX</name>
    <name type="ordered locus">FN0761</name>
</gene>
<name>COAX_FUSNN</name>
<protein>
    <recommendedName>
        <fullName evidence="1">Type III pantothenate kinase</fullName>
        <ecNumber evidence="1">2.7.1.33</ecNumber>
    </recommendedName>
    <alternativeName>
        <fullName evidence="1">PanK-III</fullName>
    </alternativeName>
    <alternativeName>
        <fullName evidence="1">Pantothenic acid kinase</fullName>
    </alternativeName>
</protein>
<accession>Q8RFE4</accession>
<sequence length="256" mass="28601">MIIGIDIGNTHIVTGIYDNNGELISTFRIATNDKMTEDEYFSYFNNITKYNEISIKKVDAILISSVVPNIIITFQFFARKYFKVEATIVDLEKKLPFTFAKGINYTGFGADRIIDITEAMQKYPDKNLVIFDFGTATTYDVLKKGVYIGGGILPGIDMSINALYGNTAKLPRVKFTTPSSVLGTDTMKQIQAAIFFGYAGQIKHIIKKINEELNEEIFVLATGGLGKILSAEIDEIDEYDANLSLKGLYTLYKLNK</sequence>